<sequence length="344" mass="39027">MITQRQNDILNLIVELFTQTHEPVGSKALQRTIDSSSATIRNDMAKLEKLGLLEKAHTSSGRMPSPAGFKYFVEHSLRLDSIDEQDIYHVIKTFDFEAFKLEDMLQKASHILAEMTGYTSVILDVEPARQRLTGFDVVQLSNHDALAVMTLDESKPVTVQFAIPRNFLTRDLIAFKAIVEERLLDSSVIDIHYKLRTEIPQIVQKYFVTTDNVLQLFDYVFSELFLETVFVAGKVNSLTYSDLSTYQFLDNEQQVAISLRQSLKEGEMASVQVADSQEAALADVSVLTHKFLIPYRGFGLLSLIGPIDMDYRRSVSLVNIIGKVLAAKLGDYYRYLNSNHYEVH</sequence>
<name>HRCA_STRPF</name>
<proteinExistence type="inferred from homology"/>
<comment type="function">
    <text evidence="1">Negative regulator of class I heat shock genes (grpE-dnaK-dnaJ and groELS operons). Prevents heat-shock induction of these operons.</text>
</comment>
<comment type="similarity">
    <text evidence="1">Belongs to the HrcA family.</text>
</comment>
<dbReference type="EMBL" id="CP000262">
    <property type="protein sequence ID" value="ABF38510.1"/>
    <property type="molecule type" value="Genomic_DNA"/>
</dbReference>
<dbReference type="SMR" id="Q1J576"/>
<dbReference type="KEGG" id="spi:MGAS10750_Spy1560"/>
<dbReference type="HOGENOM" id="CLU_050019_1_0_9"/>
<dbReference type="Proteomes" id="UP000002434">
    <property type="component" value="Chromosome"/>
</dbReference>
<dbReference type="GO" id="GO:0003677">
    <property type="term" value="F:DNA binding"/>
    <property type="evidence" value="ECO:0007669"/>
    <property type="project" value="InterPro"/>
</dbReference>
<dbReference type="GO" id="GO:0045892">
    <property type="term" value="P:negative regulation of DNA-templated transcription"/>
    <property type="evidence" value="ECO:0007669"/>
    <property type="project" value="UniProtKB-UniRule"/>
</dbReference>
<dbReference type="Gene3D" id="3.30.450.40">
    <property type="match status" value="1"/>
</dbReference>
<dbReference type="Gene3D" id="3.30.390.60">
    <property type="entry name" value="Heat-inducible transcription repressor hrca homolog, domain 3"/>
    <property type="match status" value="1"/>
</dbReference>
<dbReference type="Gene3D" id="1.10.10.10">
    <property type="entry name" value="Winged helix-like DNA-binding domain superfamily/Winged helix DNA-binding domain"/>
    <property type="match status" value="1"/>
</dbReference>
<dbReference type="HAMAP" id="MF_00081">
    <property type="entry name" value="HrcA"/>
    <property type="match status" value="1"/>
</dbReference>
<dbReference type="InterPro" id="IPR029016">
    <property type="entry name" value="GAF-like_dom_sf"/>
</dbReference>
<dbReference type="InterPro" id="IPR002571">
    <property type="entry name" value="HrcA"/>
</dbReference>
<dbReference type="InterPro" id="IPR021153">
    <property type="entry name" value="HrcA_C"/>
</dbReference>
<dbReference type="InterPro" id="IPR036388">
    <property type="entry name" value="WH-like_DNA-bd_sf"/>
</dbReference>
<dbReference type="InterPro" id="IPR036390">
    <property type="entry name" value="WH_DNA-bd_sf"/>
</dbReference>
<dbReference type="InterPro" id="IPR005104">
    <property type="entry name" value="WHTH_HrcA_DNA-bd"/>
</dbReference>
<dbReference type="InterPro" id="IPR023120">
    <property type="entry name" value="WHTH_transcript_rep_HrcA_IDD"/>
</dbReference>
<dbReference type="NCBIfam" id="TIGR00331">
    <property type="entry name" value="hrcA"/>
    <property type="match status" value="1"/>
</dbReference>
<dbReference type="PANTHER" id="PTHR34824">
    <property type="entry name" value="HEAT-INDUCIBLE TRANSCRIPTION REPRESSOR HRCA"/>
    <property type="match status" value="1"/>
</dbReference>
<dbReference type="PANTHER" id="PTHR34824:SF1">
    <property type="entry name" value="HEAT-INDUCIBLE TRANSCRIPTION REPRESSOR HRCA"/>
    <property type="match status" value="1"/>
</dbReference>
<dbReference type="Pfam" id="PF01628">
    <property type="entry name" value="HrcA"/>
    <property type="match status" value="1"/>
</dbReference>
<dbReference type="Pfam" id="PF03444">
    <property type="entry name" value="HrcA_DNA-bdg"/>
    <property type="match status" value="1"/>
</dbReference>
<dbReference type="PIRSF" id="PIRSF005485">
    <property type="entry name" value="HrcA"/>
    <property type="match status" value="1"/>
</dbReference>
<dbReference type="SUPFAM" id="SSF55781">
    <property type="entry name" value="GAF domain-like"/>
    <property type="match status" value="1"/>
</dbReference>
<dbReference type="SUPFAM" id="SSF46785">
    <property type="entry name" value="Winged helix' DNA-binding domain"/>
    <property type="match status" value="1"/>
</dbReference>
<evidence type="ECO:0000255" key="1">
    <source>
        <dbReference type="HAMAP-Rule" id="MF_00081"/>
    </source>
</evidence>
<feature type="chain" id="PRO_1000010460" description="Heat-inducible transcription repressor HrcA">
    <location>
        <begin position="1"/>
        <end position="344"/>
    </location>
</feature>
<reference key="1">
    <citation type="journal article" date="2006" name="Proc. Natl. Acad. Sci. U.S.A.">
        <title>Molecular genetic anatomy of inter- and intraserotype variation in the human bacterial pathogen group A Streptococcus.</title>
        <authorList>
            <person name="Beres S.B."/>
            <person name="Richter E.W."/>
            <person name="Nagiec M.J."/>
            <person name="Sumby P."/>
            <person name="Porcella S.F."/>
            <person name="DeLeo F.R."/>
            <person name="Musser J.M."/>
        </authorList>
    </citation>
    <scope>NUCLEOTIDE SEQUENCE [LARGE SCALE GENOMIC DNA]</scope>
    <source>
        <strain>MGAS10750</strain>
    </source>
</reference>
<keyword id="KW-0678">Repressor</keyword>
<keyword id="KW-0346">Stress response</keyword>
<keyword id="KW-0804">Transcription</keyword>
<keyword id="KW-0805">Transcription regulation</keyword>
<accession>Q1J576</accession>
<protein>
    <recommendedName>
        <fullName evidence="1">Heat-inducible transcription repressor HrcA</fullName>
    </recommendedName>
</protein>
<organism>
    <name type="scientific">Streptococcus pyogenes serotype M4 (strain MGAS10750)</name>
    <dbReference type="NCBI Taxonomy" id="370554"/>
    <lineage>
        <taxon>Bacteria</taxon>
        <taxon>Bacillati</taxon>
        <taxon>Bacillota</taxon>
        <taxon>Bacilli</taxon>
        <taxon>Lactobacillales</taxon>
        <taxon>Streptococcaceae</taxon>
        <taxon>Streptococcus</taxon>
    </lineage>
</organism>
<gene>
    <name evidence="1" type="primary">hrcA</name>
    <name type="ordered locus">MGAS10750_Spy1560</name>
</gene>